<organism>
    <name type="scientific">Clostridioides difficile (strain 630)</name>
    <name type="common">Peptoclostridium difficile</name>
    <dbReference type="NCBI Taxonomy" id="272563"/>
    <lineage>
        <taxon>Bacteria</taxon>
        <taxon>Bacillati</taxon>
        <taxon>Bacillota</taxon>
        <taxon>Clostridia</taxon>
        <taxon>Peptostreptococcales</taxon>
        <taxon>Peptostreptococcaceae</taxon>
        <taxon>Clostridioides</taxon>
    </lineage>
</organism>
<dbReference type="EMBL" id="AM180355">
    <property type="protein sequence ID" value="CAJ68376.1"/>
    <property type="molecule type" value="Genomic_DNA"/>
</dbReference>
<dbReference type="RefSeq" id="WP_003439363.1">
    <property type="nucleotide sequence ID" value="NZ_JAUPES010000019.1"/>
</dbReference>
<dbReference type="RefSeq" id="YP_001088012.1">
    <property type="nucleotide sequence ID" value="NC_009089.1"/>
</dbReference>
<dbReference type="SMR" id="Q18C29"/>
<dbReference type="STRING" id="272563.CD630_15110"/>
<dbReference type="EnsemblBacteria" id="CAJ68376">
    <property type="protein sequence ID" value="CAJ68376"/>
    <property type="gene ID" value="CD630_15110"/>
</dbReference>
<dbReference type="KEGG" id="cdf:CD630_15110"/>
<dbReference type="KEGG" id="pdc:CDIF630_01676"/>
<dbReference type="PATRIC" id="fig|272563.120.peg.1581"/>
<dbReference type="eggNOG" id="ENOG502Z8AB">
    <property type="taxonomic scope" value="Bacteria"/>
</dbReference>
<dbReference type="OrthoDB" id="1633927at2"/>
<dbReference type="BioCyc" id="PDIF272563:G12WB-1647-MONOMER"/>
<dbReference type="Proteomes" id="UP000001978">
    <property type="component" value="Chromosome"/>
</dbReference>
<dbReference type="GO" id="GO:0030435">
    <property type="term" value="P:sporulation resulting in formation of a cellular spore"/>
    <property type="evidence" value="ECO:0007669"/>
    <property type="project" value="UniProtKB-KW"/>
</dbReference>
<dbReference type="Gene3D" id="1.20.1260.120">
    <property type="entry name" value="Protein of unknown function DUF2935"/>
    <property type="match status" value="1"/>
</dbReference>
<dbReference type="InterPro" id="IPR021328">
    <property type="entry name" value="CotB-like"/>
</dbReference>
<dbReference type="Pfam" id="PF11155">
    <property type="entry name" value="DUF2935"/>
    <property type="match status" value="2"/>
</dbReference>
<dbReference type="SUPFAM" id="SSF158430">
    <property type="entry name" value="Bacillus cereus metalloprotein-like"/>
    <property type="match status" value="2"/>
</dbReference>
<protein>
    <recommendedName>
        <fullName evidence="6">Spore coat protein CotB</fullName>
    </recommendedName>
</protein>
<feature type="chain" id="PRO_0000458889" description="Spore coat protein CotB">
    <location>
        <begin position="1"/>
        <end position="304"/>
    </location>
</feature>
<reference key="1">
    <citation type="journal article" date="2006" name="Nat. Genet.">
        <title>The multidrug-resistant human pathogen Clostridium difficile has a highly mobile, mosaic genome.</title>
        <authorList>
            <person name="Sebaihia M."/>
            <person name="Wren B.W."/>
            <person name="Mullany P."/>
            <person name="Fairweather N.F."/>
            <person name="Minton N."/>
            <person name="Stabler R."/>
            <person name="Thomson N.R."/>
            <person name="Roberts A.P."/>
            <person name="Cerdeno-Tarraga A.M."/>
            <person name="Wang H."/>
            <person name="Holden M.T.G."/>
            <person name="Wright A."/>
            <person name="Churcher C."/>
            <person name="Quail M.A."/>
            <person name="Baker S."/>
            <person name="Bason N."/>
            <person name="Brooks K."/>
            <person name="Chillingworth T."/>
            <person name="Cronin A."/>
            <person name="Davis P."/>
            <person name="Dowd L."/>
            <person name="Fraser A."/>
            <person name="Feltwell T."/>
            <person name="Hance Z."/>
            <person name="Holroyd S."/>
            <person name="Jagels K."/>
            <person name="Moule S."/>
            <person name="Mungall K."/>
            <person name="Price C."/>
            <person name="Rabbinowitsch E."/>
            <person name="Sharp S."/>
            <person name="Simmonds M."/>
            <person name="Stevens K."/>
            <person name="Unwin L."/>
            <person name="Whithead S."/>
            <person name="Dupuy B."/>
            <person name="Dougan G."/>
            <person name="Barrell B."/>
            <person name="Parkhill J."/>
        </authorList>
    </citation>
    <scope>NUCLEOTIDE SEQUENCE [LARGE SCALE GENOMIC DNA]</scope>
    <source>
        <strain>630</strain>
    </source>
</reference>
<reference key="2">
    <citation type="journal article" date="2011" name="J. Bacteriol.">
        <title>Surface layers of Clostridium difficile endospores.</title>
        <authorList>
            <person name="Permpoonpattana P."/>
            <person name="Tolls E.H."/>
            <person name="Nadem R."/>
            <person name="Tan S."/>
            <person name="Brisson A."/>
            <person name="Cutting S.M."/>
        </authorList>
    </citation>
    <scope>IDENTIFICATION BY MASS SPECTROMETRY</scope>
    <scope>SUBCELLULAR LOCATION</scope>
    <source>
        <strain>630</strain>
    </source>
</reference>
<reference key="3">
    <citation type="journal article" date="2013" name="J. Bacteriol.">
        <title>Functional characterization of Clostridium difficile spore coat proteins.</title>
        <authorList>
            <person name="Permpoonpattana P."/>
            <person name="Phetcharaburanin J."/>
            <person name="Mikelsone A."/>
            <person name="Dembek M."/>
            <person name="Tan S."/>
            <person name="Brisson M.C."/>
            <person name="La Ragione R."/>
            <person name="Brisson A.R."/>
            <person name="Fairweather N."/>
            <person name="Hong H.A."/>
            <person name="Cutting S.M."/>
        </authorList>
    </citation>
    <scope>SUBCELLULAR LOCATION</scope>
    <scope>DISRUPTION PHENOTYPE</scope>
    <source>
        <strain>630</strain>
    </source>
</reference>
<reference key="4">
    <citation type="journal article" date="2015" name="J. Proteomics">
        <title>Protein composition of the outermost exosporium-like layer of Clostridium difficile 630 spores.</title>
        <authorList>
            <person name="Diaz-Gonzalez F."/>
            <person name="Milano M."/>
            <person name="Olguin-Araneda V."/>
            <person name="Pizarro-Cerda J."/>
            <person name="Castro-Cordova P."/>
            <person name="Tzeng S.C."/>
            <person name="Maier C.S."/>
            <person name="Sarker M.R."/>
            <person name="Paredes-Sabja D."/>
        </authorList>
    </citation>
    <scope>SUBCELLULAR LOCATION</scope>
    <source>
        <strain>630</strain>
    </source>
</reference>
<reference key="5">
    <citation type="journal article" date="2022" name="Microorganisms">
        <title>Role of the Spore Coat Proteins CotA and CotB, and the Spore Surface Protein CDIF630_02480, on the Surface Distribution of Exosporium Proteins in Clostridioides difficile 630 Spores.</title>
        <authorList>
            <person name="Montes-Bravo N."/>
            <person name="Romero-Rodriguez A."/>
            <person name="Garcia-Yunge J."/>
            <person name="Medina C."/>
            <person name="Pizarro-Guajardo M."/>
            <person name="Paredes-Sabja D."/>
        </authorList>
    </citation>
    <scope>FUNCTION</scope>
    <scope>DISRUPTION PHENOTYPE</scope>
    <source>
        <strain>630</strain>
    </source>
</reference>
<keyword id="KW-1185">Reference proteome</keyword>
<keyword id="KW-0749">Sporulation</keyword>
<accession>Q18C29</accession>
<evidence type="ECO:0000269" key="1">
    <source>
    </source>
</evidence>
<evidence type="ECO:0000269" key="2">
    <source>
    </source>
</evidence>
<evidence type="ECO:0000269" key="3">
    <source>
    </source>
</evidence>
<evidence type="ECO:0000269" key="4">
    <source>
    </source>
</evidence>
<evidence type="ECO:0000303" key="5">
    <source>
    </source>
</evidence>
<evidence type="ECO:0000303" key="6">
    <source>
    </source>
</evidence>
<evidence type="ECO:0000312" key="7">
    <source>
        <dbReference type="EMBL" id="CAJ68376.1"/>
    </source>
</evidence>
<name>COTB_CLOD6</name>
<sequence>MIDNQKYVILSLELHLFFSRIMKEHALFLEAGFTNKNYNLAMEADHYKKQFEDLLSYTVSASNGIIRPDILYSEELVTTLTSVAEQKTEEFTGIEINKNITTRELNLQSGVNPQVGQDLVNYVAQLNSDAIRLLDGLINFKERVLDGVLSCTIFTSNYPLLLEHIIHEANLYRSYVVDLENKIDIESKNAKEIELFWDHIMMEHALFMRGLLDPSEGELINTSNDFAIKFNELIEKTNEMTDSNIKNITEETLNETVEFKDFKEAGASGIEQCKIKSIILPLLADHVLREANHYIRILESYKNM</sequence>
<gene>
    <name evidence="5" type="primary">cotB</name>
    <name evidence="7" type="ordered locus">CD630_15110</name>
    <name evidence="7" type="ORF">CD1511</name>
</gene>
<comment type="function">
    <text evidence="4">Contributes to the formation of thick-exosporium spores.</text>
</comment>
<comment type="subcellular location">
    <subcellularLocation>
        <location evidence="1 3">Spore coat</location>
    </subcellularLocation>
    <subcellularLocation>
        <location evidence="2 3">Spore</location>
        <location evidence="2 3">Perispore</location>
    </subcellularLocation>
    <text evidence="2 3">Mainly located in the spore coat (PubMed:25849250). Also present in the exosporium (or perispore) layer, the outermost surface of spores (PubMed:23335421, PubMed:25849250).</text>
</comment>
<comment type="disruption phenotype">
    <text evidence="2 4">Inactivation of the gene produces changes in the ultrastructure of the spore (PubMed:36296193). In thin-exosporium spores, the absence of the gene leads to a thinner coat layer (PubMed:36296193). Inactivation of the gene has no significant effect on the presence of a polar appendage (PubMed:36296193). Disruption of the gene does not affect the integrity of the spore (PubMed:23335421).</text>
</comment>
<proteinExistence type="evidence at protein level"/>